<proteinExistence type="evidence at protein level"/>
<sequence>MRFVVTGGLAGIVDFGLYVVLYKVAGLQVDLSKAISFIVGTITAYLINRRWTFQAEPSTARFVAVMLLYGITFAVQVGLNHLCLALLHYRAWAIPVAFVIAQGTATVINFIVQRAVIFRIR</sequence>
<comment type="function">
    <text evidence="4">Required for arabinosylation of arabinogalactan (AG), an essential component of the mycobacterial cell wall. Probably acts as an anchor protein recruiting AftA, the first arabinosyl transferase involved in AG biosynthesis.</text>
</comment>
<comment type="pathway">
    <text evidence="4">Cell wall biogenesis; cell wall polysaccharide biosynthesis.</text>
</comment>
<comment type="subunit">
    <text evidence="2 4">Interacts with the priming arabinosyltransferase AftA (PubMed:26369580). Also interacts with the galactosyltransferase GlfT1, which initiates the polymerization of the galactan domain of AG (PubMed:23038254). Is thus probably part of an AG biosynthetic complex (PubMed:23038254, PubMed:26369580).</text>
</comment>
<comment type="subcellular location">
    <subcellularLocation>
        <location evidence="3 4">Cell inner membrane</location>
        <topology evidence="1 8">Multi-pass membrane protein</topology>
    </subcellularLocation>
</comment>
<comment type="induction">
    <text evidence="4">Is cotranscribed with dprE1, dprE2 and aftA.</text>
</comment>
<comment type="disruption phenotype">
    <text evidence="4">Cells lacking this gene display impaired growth and abnormal cell morphology, since they are shorter and more swollen than wild-type cells. This phenotype likely stems from the decreased incorporation of arabinose into arabinogalactan observed in the disruption mutant. The mutant also accumulates decaprenyl-phospho-arabinose (DPA), the arabinose donor required for the synthesis of cell-wall arabinans. The lipoglycan fraction comprising LAM (lipoarabinomannan) and LM (lipomannan) is not affected.</text>
</comment>
<comment type="similarity">
    <text evidence="5">Belongs to the GtrA family.</text>
</comment>
<comment type="caution">
    <text evidence="6 7 8">Was originally thought to be a lipid-linked sugar translocase involved in the reorientation and export of decaprenyl-phospho-arabinose (DPA) across the plasma membrane to the site of AG (arabinogalactan) and LAM (lipoarabinomannan) synthesis (PubMed:23038254). It was later shown that synthesis of DPA takes place in the periplasm and it was suggested that Rv3789 does not act as a DPA flippase but, rather, recruits AftA for arabinogalactan biosynthesis (PubMed:25906160, PubMed:26369580).</text>
</comment>
<feature type="chain" id="PRO_0000212257" description="Arabinogalactan biosynthesis recruiting protein Rv3789">
    <location>
        <begin position="1"/>
        <end position="121"/>
    </location>
</feature>
<feature type="topological domain" description="Cytoplasmic" evidence="8">
    <location>
        <begin position="1"/>
        <end position="2"/>
    </location>
</feature>
<feature type="transmembrane region" description="Helical" evidence="1">
    <location>
        <begin position="3"/>
        <end position="23"/>
    </location>
</feature>
<feature type="topological domain" description="Periplasmic" evidence="8">
    <location>
        <begin position="24"/>
        <end position="26"/>
    </location>
</feature>
<feature type="transmembrane region" description="Helical" evidence="1">
    <location>
        <begin position="27"/>
        <end position="47"/>
    </location>
</feature>
<feature type="topological domain" description="Cytoplasmic" evidence="8">
    <location>
        <begin position="48"/>
        <end position="61"/>
    </location>
</feature>
<feature type="transmembrane region" description="Helical" evidence="1">
    <location>
        <begin position="62"/>
        <end position="82"/>
    </location>
</feature>
<feature type="topological domain" description="Periplasmic" evidence="8">
    <location>
        <begin position="83"/>
        <end position="91"/>
    </location>
</feature>
<feature type="transmembrane region" description="Helical" evidence="1">
    <location>
        <begin position="92"/>
        <end position="112"/>
    </location>
</feature>
<feature type="topological domain" description="Cytoplasmic" evidence="4">
    <location>
        <begin position="113"/>
        <end position="121"/>
    </location>
</feature>
<evidence type="ECO:0000255" key="1"/>
<evidence type="ECO:0000269" key="2">
    <source>
    </source>
</evidence>
<evidence type="ECO:0000269" key="3">
    <source>
    </source>
</evidence>
<evidence type="ECO:0000269" key="4">
    <source>
    </source>
</evidence>
<evidence type="ECO:0000305" key="5"/>
<evidence type="ECO:0000305" key="6">
    <source>
    </source>
</evidence>
<evidence type="ECO:0000305" key="7">
    <source>
    </source>
</evidence>
<evidence type="ECO:0000305" key="8">
    <source>
    </source>
</evidence>
<name>AGBR_MYCTU</name>
<organism>
    <name type="scientific">Mycobacterium tuberculosis (strain ATCC 25618 / H37Rv)</name>
    <dbReference type="NCBI Taxonomy" id="83332"/>
    <lineage>
        <taxon>Bacteria</taxon>
        <taxon>Bacillati</taxon>
        <taxon>Actinomycetota</taxon>
        <taxon>Actinomycetes</taxon>
        <taxon>Mycobacteriales</taxon>
        <taxon>Mycobacteriaceae</taxon>
        <taxon>Mycobacterium</taxon>
        <taxon>Mycobacterium tuberculosis complex</taxon>
    </lineage>
</organism>
<gene>
    <name type="ordered locus">Rv3789</name>
    <name type="ORF">MTCY13D12.23</name>
</gene>
<dbReference type="EMBL" id="AL123456">
    <property type="protein sequence ID" value="CCP46618.1"/>
    <property type="molecule type" value="Genomic_DNA"/>
</dbReference>
<dbReference type="PIR" id="A70697">
    <property type="entry name" value="A70697"/>
</dbReference>
<dbReference type="RefSeq" id="NP_218306.1">
    <property type="nucleotide sequence ID" value="NC_000962.3"/>
</dbReference>
<dbReference type="RefSeq" id="WP_003420627.1">
    <property type="nucleotide sequence ID" value="NZ_NVQJ01000009.1"/>
</dbReference>
<dbReference type="STRING" id="83332.Rv3789"/>
<dbReference type="TCDB" id="2.A.129.1.2">
    <property type="family name" value="the lipid-linked sugar translocase (lst) family"/>
</dbReference>
<dbReference type="PaxDb" id="83332-Rv3789"/>
<dbReference type="DNASU" id="886109"/>
<dbReference type="GeneID" id="886109"/>
<dbReference type="KEGG" id="mtu:Rv3789"/>
<dbReference type="KEGG" id="mtv:RVBD_3789"/>
<dbReference type="PATRIC" id="fig|83332.111.peg.4213"/>
<dbReference type="TubercuList" id="Rv3789"/>
<dbReference type="eggNOG" id="COG2246">
    <property type="taxonomic scope" value="Bacteria"/>
</dbReference>
<dbReference type="InParanoid" id="P9WMS9"/>
<dbReference type="OrthoDB" id="3828151at2"/>
<dbReference type="PhylomeDB" id="P9WMS9"/>
<dbReference type="UniPathway" id="UPA00963"/>
<dbReference type="Proteomes" id="UP000001584">
    <property type="component" value="Chromosome"/>
</dbReference>
<dbReference type="GO" id="GO:0005886">
    <property type="term" value="C:plasma membrane"/>
    <property type="evidence" value="ECO:0000318"/>
    <property type="project" value="GO_Central"/>
</dbReference>
<dbReference type="GO" id="GO:0045227">
    <property type="term" value="P:capsule polysaccharide biosynthetic process"/>
    <property type="evidence" value="ECO:0007669"/>
    <property type="project" value="UniProtKB-UniPathway"/>
</dbReference>
<dbReference type="GO" id="GO:0071555">
    <property type="term" value="P:cell wall organization"/>
    <property type="evidence" value="ECO:0007669"/>
    <property type="project" value="UniProtKB-KW"/>
</dbReference>
<dbReference type="InterPro" id="IPR051401">
    <property type="entry name" value="GtrA_CellWall_Glycosyl"/>
</dbReference>
<dbReference type="InterPro" id="IPR007267">
    <property type="entry name" value="GtrA_DPMS_TM"/>
</dbReference>
<dbReference type="PANTHER" id="PTHR38459:SF6">
    <property type="entry name" value="ARABINOGALACTAN BIOSYNTHESIS RECRUITING PROTEIN RV3789"/>
    <property type="match status" value="1"/>
</dbReference>
<dbReference type="PANTHER" id="PTHR38459">
    <property type="entry name" value="PROPHAGE BACTOPRENOL-LINKED GLUCOSE TRANSLOCASE HOMOLOG"/>
    <property type="match status" value="1"/>
</dbReference>
<dbReference type="Pfam" id="PF04138">
    <property type="entry name" value="GtrA_DPMS_TM"/>
    <property type="match status" value="1"/>
</dbReference>
<reference key="1">
    <citation type="journal article" date="1998" name="Nature">
        <title>Deciphering the biology of Mycobacterium tuberculosis from the complete genome sequence.</title>
        <authorList>
            <person name="Cole S.T."/>
            <person name="Brosch R."/>
            <person name="Parkhill J."/>
            <person name="Garnier T."/>
            <person name="Churcher C.M."/>
            <person name="Harris D.E."/>
            <person name="Gordon S.V."/>
            <person name="Eiglmeier K."/>
            <person name="Gas S."/>
            <person name="Barry C.E. III"/>
            <person name="Tekaia F."/>
            <person name="Badcock K."/>
            <person name="Basham D."/>
            <person name="Brown D."/>
            <person name="Chillingworth T."/>
            <person name="Connor R."/>
            <person name="Davies R.M."/>
            <person name="Devlin K."/>
            <person name="Feltwell T."/>
            <person name="Gentles S."/>
            <person name="Hamlin N."/>
            <person name="Holroyd S."/>
            <person name="Hornsby T."/>
            <person name="Jagels K."/>
            <person name="Krogh A."/>
            <person name="McLean J."/>
            <person name="Moule S."/>
            <person name="Murphy L.D."/>
            <person name="Oliver S."/>
            <person name="Osborne J."/>
            <person name="Quail M.A."/>
            <person name="Rajandream M.A."/>
            <person name="Rogers J."/>
            <person name="Rutter S."/>
            <person name="Seeger K."/>
            <person name="Skelton S."/>
            <person name="Squares S."/>
            <person name="Squares R."/>
            <person name="Sulston J.E."/>
            <person name="Taylor K."/>
            <person name="Whitehead S."/>
            <person name="Barrell B.G."/>
        </authorList>
    </citation>
    <scope>NUCLEOTIDE SEQUENCE [LARGE SCALE GENOMIC DNA]</scope>
    <source>
        <strain>ATCC 25618 / H37Rv</strain>
    </source>
</reference>
<reference key="2">
    <citation type="journal article" date="2011" name="Mol. Cell. Proteomics">
        <title>Proteogenomic analysis of Mycobacterium tuberculosis by high resolution mass spectrometry.</title>
        <authorList>
            <person name="Kelkar D.S."/>
            <person name="Kumar D."/>
            <person name="Kumar P."/>
            <person name="Balakrishnan L."/>
            <person name="Muthusamy B."/>
            <person name="Yadav A.K."/>
            <person name="Shrivastava P."/>
            <person name="Marimuthu A."/>
            <person name="Anand S."/>
            <person name="Sundaram H."/>
            <person name="Kingsbury R."/>
            <person name="Harsha H.C."/>
            <person name="Nair B."/>
            <person name="Prasad T.S."/>
            <person name="Chauhan D.S."/>
            <person name="Katoch K."/>
            <person name="Katoch V.M."/>
            <person name="Kumar P."/>
            <person name="Chaerkady R."/>
            <person name="Ramachandran S."/>
            <person name="Dash D."/>
            <person name="Pandey A."/>
        </authorList>
    </citation>
    <scope>IDENTIFICATION BY MASS SPECTROMETRY [LARGE SCALE ANALYSIS]</scope>
    <source>
        <strain>ATCC 25618 / H37Rv</strain>
    </source>
</reference>
<reference key="3">
    <citation type="journal article" date="2012" name="J. Biol. Chem.">
        <title>A small multidrug resistance-like transporter involved in the arabinosylation of arabinogalactan and lipoarabinomannan in mycobacteria.</title>
        <authorList>
            <person name="Larrouy-Maumus G."/>
            <person name="Skovierova H."/>
            <person name="Dhouib R."/>
            <person name="Angala S.K."/>
            <person name="Zuberogoitia S."/>
            <person name="Pham H."/>
            <person name="Villela A.D."/>
            <person name="Mikusova K."/>
            <person name="Noguera A."/>
            <person name="Gilleron M."/>
            <person name="Valentinova L."/>
            <person name="Kordulakova J."/>
            <person name="Brennan P.J."/>
            <person name="Puzo G."/>
            <person name="Nigou J."/>
            <person name="Jackson M."/>
        </authorList>
    </citation>
    <scope>ORIGINAL FUNCTION AS A TRANSLOCASE</scope>
    <scope>INTERACTION WITH GLFT1</scope>
    <source>
        <strain>ATCC 25618 / H37Rv</strain>
    </source>
</reference>
<reference key="4">
    <citation type="journal article" date="2015" name="ACS Chem. Biol.">
        <title>DprE1 is a vulnerable tuberculosis drug target due to its cell wall localization.</title>
        <authorList>
            <person name="Brecik M."/>
            <person name="Centarova I."/>
            <person name="Mukherjee R."/>
            <person name="Kolly G.S."/>
            <person name="Huszar S."/>
            <person name="Bobovska A."/>
            <person name="Kilacskova E."/>
            <person name="Mokosova V."/>
            <person name="Svetlikova Z."/>
            <person name="Sarkan M."/>
            <person name="Neres J."/>
            <person name="Kordulakova J."/>
            <person name="Cole S.T."/>
            <person name="Mikusova K."/>
        </authorList>
    </citation>
    <scope>SUBCELLULAR LOCATION</scope>
    <source>
        <strain>H37Rv</strain>
    </source>
</reference>
<reference key="5">
    <citation type="journal article" date="2015" name="J. Bacteriol.">
        <title>GtrA protein Rv3789 is required for arabinosylation of arabinogalactan in Mycobacterium tuberculosis.</title>
        <authorList>
            <person name="Kolly G.S."/>
            <person name="Mukherjee R."/>
            <person name="Kilacskova E."/>
            <person name="Abriata L.A."/>
            <person name="Raccaud M."/>
            <person name="Blasko J."/>
            <person name="Sala C."/>
            <person name="Dal Peraro M."/>
            <person name="Mikusova K."/>
            <person name="Cole S.T."/>
        </authorList>
    </citation>
    <scope>FUNCTION IN ARABINAN BIOSYNTHESIS</scope>
    <scope>INDUCTION</scope>
    <scope>SUBCELLULAR LOCATION</scope>
    <scope>TOPOLOGY</scope>
    <scope>PATHWAY</scope>
    <scope>INTERACTION WITH AFTA</scope>
    <scope>DISRUPTION PHENOTYPE</scope>
    <source>
        <strain>H37Rv</strain>
    </source>
</reference>
<keyword id="KW-0997">Cell inner membrane</keyword>
<keyword id="KW-1003">Cell membrane</keyword>
<keyword id="KW-0961">Cell wall biogenesis/degradation</keyword>
<keyword id="KW-0472">Membrane</keyword>
<keyword id="KW-1185">Reference proteome</keyword>
<keyword id="KW-0812">Transmembrane</keyword>
<keyword id="KW-1133">Transmembrane helix</keyword>
<accession>P9WMS9</accession>
<accession>L0TDJ8</accession>
<accession>P64292</accession>
<accession>P72055</accession>
<protein>
    <recommendedName>
        <fullName evidence="8">Arabinogalactan biosynthesis recruiting protein Rv3789</fullName>
    </recommendedName>
</protein>